<reference key="1">
    <citation type="journal article" date="2008" name="J. Bacteriol.">
        <title>The genome of Heliobacterium modesticaldum, a phototrophic representative of the Firmicutes containing the simplest photosynthetic apparatus.</title>
        <authorList>
            <person name="Sattley W.M."/>
            <person name="Madigan M.T."/>
            <person name="Swingley W.D."/>
            <person name="Cheung P.C."/>
            <person name="Clocksin K.M."/>
            <person name="Conrad A.L."/>
            <person name="Dejesa L.C."/>
            <person name="Honchak B.M."/>
            <person name="Jung D.O."/>
            <person name="Karbach L.E."/>
            <person name="Kurdoglu A."/>
            <person name="Lahiri S."/>
            <person name="Mastrian S.D."/>
            <person name="Page L.E."/>
            <person name="Taylor H.L."/>
            <person name="Wang Z.T."/>
            <person name="Raymond J."/>
            <person name="Chen M."/>
            <person name="Blankenship R.E."/>
            <person name="Touchman J.W."/>
        </authorList>
    </citation>
    <scope>NUCLEOTIDE SEQUENCE [LARGE SCALE GENOMIC DNA]</scope>
    <source>
        <strain>ATCC 51547 / Ice1</strain>
    </source>
</reference>
<protein>
    <recommendedName>
        <fullName evidence="1">Glutamyl-tRNA(Gln) amidotransferase subunit A</fullName>
        <shortName evidence="1">Glu-ADT subunit A</shortName>
        <ecNumber evidence="1">6.3.5.7</ecNumber>
    </recommendedName>
</protein>
<feature type="chain" id="PRO_1000095137" description="Glutamyl-tRNA(Gln) amidotransferase subunit A">
    <location>
        <begin position="1"/>
        <end position="487"/>
    </location>
</feature>
<feature type="active site" description="Charge relay system" evidence="1">
    <location>
        <position position="79"/>
    </location>
</feature>
<feature type="active site" description="Charge relay system" evidence="1">
    <location>
        <position position="154"/>
    </location>
</feature>
<feature type="active site" description="Acyl-ester intermediate" evidence="1">
    <location>
        <position position="178"/>
    </location>
</feature>
<sequence length="487" mass="52524">MKLYTKTAHELHDLLVRKEVSATEIVKTQADRMQALEPKIRAFVTLTVDKALEQAARVDAKIAAGEAIGPLEGIPMAIKDNMCTDGVRTTCSSKILNNFVPPYDATVVTKLKEAGAVMMGKTNLDEFAMGSSTENSGFFATCNPWDIERVPGGSSGGSAASVAAGQAVFSLGSDTGGSIRQPAAFCGVVGLKPTYGAVSRFGLIAFASSLDQIGPFTRDVRDCAHVMNAIAGHDAKDSTSAPVDYPDYTSLLGKPIKGWRVGLPKEYFGDGMDPEVKEVIEKAVKTIEDLGAEVAECSLPHTEYALPVYYLIAPAEASSNLARYDGVRYGYRSESADDLITMFKKTRAEGFGDEVKRRIMLGTYALSSGYYDAYYLKALKVRTLIKNDFDQAFEKFDVILSPTTPTVAFKFGDRTDNPLQMYLSDIYTLSVNLAGIPGLSINAGFAKGMPVGLQIIGKPFDEARLLQIAYAYEEATGCHSKMPDLGV</sequence>
<accession>B0TDK7</accession>
<evidence type="ECO:0000255" key="1">
    <source>
        <dbReference type="HAMAP-Rule" id="MF_00120"/>
    </source>
</evidence>
<proteinExistence type="inferred from homology"/>
<organism>
    <name type="scientific">Heliobacterium modesticaldum (strain ATCC 51547 / Ice1)</name>
    <dbReference type="NCBI Taxonomy" id="498761"/>
    <lineage>
        <taxon>Bacteria</taxon>
        <taxon>Bacillati</taxon>
        <taxon>Bacillota</taxon>
        <taxon>Clostridia</taxon>
        <taxon>Eubacteriales</taxon>
        <taxon>Heliobacteriaceae</taxon>
        <taxon>Heliomicrobium</taxon>
    </lineage>
</organism>
<gene>
    <name evidence="1" type="primary">gatA</name>
    <name type="ordered locus">Helmi_29070</name>
    <name type="ORF">HM1_3025</name>
</gene>
<name>GATA_HELMI</name>
<dbReference type="EC" id="6.3.5.7" evidence="1"/>
<dbReference type="EMBL" id="CP000930">
    <property type="protein sequence ID" value="ABZ85532.1"/>
    <property type="molecule type" value="Genomic_DNA"/>
</dbReference>
<dbReference type="RefSeq" id="WP_012284007.1">
    <property type="nucleotide sequence ID" value="NC_010337.2"/>
</dbReference>
<dbReference type="SMR" id="B0TDK7"/>
<dbReference type="STRING" id="498761.HM1_3025"/>
<dbReference type="KEGG" id="hmo:HM1_3025"/>
<dbReference type="eggNOG" id="COG0154">
    <property type="taxonomic scope" value="Bacteria"/>
</dbReference>
<dbReference type="HOGENOM" id="CLU_009600_0_3_9"/>
<dbReference type="OrthoDB" id="9811471at2"/>
<dbReference type="Proteomes" id="UP000008550">
    <property type="component" value="Chromosome"/>
</dbReference>
<dbReference type="GO" id="GO:0030956">
    <property type="term" value="C:glutamyl-tRNA(Gln) amidotransferase complex"/>
    <property type="evidence" value="ECO:0007669"/>
    <property type="project" value="InterPro"/>
</dbReference>
<dbReference type="GO" id="GO:0005524">
    <property type="term" value="F:ATP binding"/>
    <property type="evidence" value="ECO:0007669"/>
    <property type="project" value="UniProtKB-KW"/>
</dbReference>
<dbReference type="GO" id="GO:0050567">
    <property type="term" value="F:glutaminyl-tRNA synthase (glutamine-hydrolyzing) activity"/>
    <property type="evidence" value="ECO:0007669"/>
    <property type="project" value="UniProtKB-UniRule"/>
</dbReference>
<dbReference type="GO" id="GO:0006412">
    <property type="term" value="P:translation"/>
    <property type="evidence" value="ECO:0007669"/>
    <property type="project" value="UniProtKB-UniRule"/>
</dbReference>
<dbReference type="Gene3D" id="3.90.1300.10">
    <property type="entry name" value="Amidase signature (AS) domain"/>
    <property type="match status" value="1"/>
</dbReference>
<dbReference type="HAMAP" id="MF_00120">
    <property type="entry name" value="GatA"/>
    <property type="match status" value="1"/>
</dbReference>
<dbReference type="InterPro" id="IPR000120">
    <property type="entry name" value="Amidase"/>
</dbReference>
<dbReference type="InterPro" id="IPR020556">
    <property type="entry name" value="Amidase_CS"/>
</dbReference>
<dbReference type="InterPro" id="IPR023631">
    <property type="entry name" value="Amidase_dom"/>
</dbReference>
<dbReference type="InterPro" id="IPR036928">
    <property type="entry name" value="AS_sf"/>
</dbReference>
<dbReference type="InterPro" id="IPR004412">
    <property type="entry name" value="GatA"/>
</dbReference>
<dbReference type="NCBIfam" id="TIGR00132">
    <property type="entry name" value="gatA"/>
    <property type="match status" value="1"/>
</dbReference>
<dbReference type="PANTHER" id="PTHR11895:SF151">
    <property type="entry name" value="GLUTAMYL-TRNA(GLN) AMIDOTRANSFERASE SUBUNIT A"/>
    <property type="match status" value="1"/>
</dbReference>
<dbReference type="PANTHER" id="PTHR11895">
    <property type="entry name" value="TRANSAMIDASE"/>
    <property type="match status" value="1"/>
</dbReference>
<dbReference type="Pfam" id="PF01425">
    <property type="entry name" value="Amidase"/>
    <property type="match status" value="1"/>
</dbReference>
<dbReference type="PIRSF" id="PIRSF001221">
    <property type="entry name" value="Amidase_fungi"/>
    <property type="match status" value="1"/>
</dbReference>
<dbReference type="SUPFAM" id="SSF75304">
    <property type="entry name" value="Amidase signature (AS) enzymes"/>
    <property type="match status" value="1"/>
</dbReference>
<dbReference type="PROSITE" id="PS00571">
    <property type="entry name" value="AMIDASES"/>
    <property type="match status" value="1"/>
</dbReference>
<keyword id="KW-0067">ATP-binding</keyword>
<keyword id="KW-0436">Ligase</keyword>
<keyword id="KW-0547">Nucleotide-binding</keyword>
<keyword id="KW-0648">Protein biosynthesis</keyword>
<keyword id="KW-1185">Reference proteome</keyword>
<comment type="function">
    <text evidence="1">Allows the formation of correctly charged Gln-tRNA(Gln) through the transamidation of misacylated Glu-tRNA(Gln) in organisms which lack glutaminyl-tRNA synthetase. The reaction takes place in the presence of glutamine and ATP through an activated gamma-phospho-Glu-tRNA(Gln).</text>
</comment>
<comment type="catalytic activity">
    <reaction evidence="1">
        <text>L-glutamyl-tRNA(Gln) + L-glutamine + ATP + H2O = L-glutaminyl-tRNA(Gln) + L-glutamate + ADP + phosphate + H(+)</text>
        <dbReference type="Rhea" id="RHEA:17521"/>
        <dbReference type="Rhea" id="RHEA-COMP:9681"/>
        <dbReference type="Rhea" id="RHEA-COMP:9684"/>
        <dbReference type="ChEBI" id="CHEBI:15377"/>
        <dbReference type="ChEBI" id="CHEBI:15378"/>
        <dbReference type="ChEBI" id="CHEBI:29985"/>
        <dbReference type="ChEBI" id="CHEBI:30616"/>
        <dbReference type="ChEBI" id="CHEBI:43474"/>
        <dbReference type="ChEBI" id="CHEBI:58359"/>
        <dbReference type="ChEBI" id="CHEBI:78520"/>
        <dbReference type="ChEBI" id="CHEBI:78521"/>
        <dbReference type="ChEBI" id="CHEBI:456216"/>
        <dbReference type="EC" id="6.3.5.7"/>
    </reaction>
</comment>
<comment type="subunit">
    <text evidence="1">Heterotrimer of A, B and C subunits.</text>
</comment>
<comment type="similarity">
    <text evidence="1">Belongs to the amidase family. GatA subfamily.</text>
</comment>